<feature type="chain" id="PRO_0000377672" description="COX assembly mitochondrial protein">
    <location>
        <begin position="1"/>
        <end position="111"/>
    </location>
</feature>
<feature type="domain" description="CHCH" evidence="2">
    <location>
        <begin position="39"/>
        <end position="82"/>
    </location>
</feature>
<feature type="short sequence motif" description="Cx9C motif 1" evidence="2">
    <location>
        <begin position="42"/>
        <end position="52"/>
    </location>
</feature>
<feature type="short sequence motif" description="Cx9C motif 2" evidence="2">
    <location>
        <begin position="64"/>
        <end position="74"/>
    </location>
</feature>
<feature type="disulfide bond" evidence="2">
    <location>
        <begin position="42"/>
        <end position="74"/>
    </location>
</feature>
<feature type="disulfide bond" evidence="2">
    <location>
        <begin position="52"/>
        <end position="64"/>
    </location>
</feature>
<protein>
    <recommendedName>
        <fullName>COX assembly mitochondrial protein</fullName>
    </recommendedName>
    <alternativeName>
        <fullName>COX biogenesis factor CMC1</fullName>
    </alternativeName>
    <alternativeName>
        <fullName>Mitochondrial metallochaperone-like protein CMC1</fullName>
    </alternativeName>
</protein>
<keyword id="KW-0143">Chaperone</keyword>
<keyword id="KW-0186">Copper</keyword>
<keyword id="KW-1015">Disulfide bond</keyword>
<keyword id="KW-0472">Membrane</keyword>
<keyword id="KW-0479">Metal-binding</keyword>
<keyword id="KW-0496">Mitochondrion</keyword>
<keyword id="KW-0999">Mitochondrion inner membrane</keyword>
<sequence>MEQNKDPQMISKHSSRLPIWVLSPREEQQARKNLKTETYKKCANFVQAMADCAKANGMKVFPTCDKQRDEMKSCLLFYQTDEKYLDGERDKIVLEKINKLEKLCQKQSSTK</sequence>
<name>COXM1_YEAS7</name>
<reference key="1">
    <citation type="journal article" date="2007" name="Proc. Natl. Acad. Sci. U.S.A.">
        <title>Genome sequencing and comparative analysis of Saccharomyces cerevisiae strain YJM789.</title>
        <authorList>
            <person name="Wei W."/>
            <person name="McCusker J.H."/>
            <person name="Hyman R.W."/>
            <person name="Jones T."/>
            <person name="Ning Y."/>
            <person name="Cao Z."/>
            <person name="Gu Z."/>
            <person name="Bruno D."/>
            <person name="Miranda M."/>
            <person name="Nguyen M."/>
            <person name="Wilhelmy J."/>
            <person name="Komp C."/>
            <person name="Tamse R."/>
            <person name="Wang X."/>
            <person name="Jia P."/>
            <person name="Luedi P."/>
            <person name="Oefner P.J."/>
            <person name="David L."/>
            <person name="Dietrich F.S."/>
            <person name="Li Y."/>
            <person name="Davis R.W."/>
            <person name="Steinmetz L.M."/>
        </authorList>
    </citation>
    <scope>NUCLEOTIDE SEQUENCE [LARGE SCALE GENOMIC DNA]</scope>
    <source>
        <strain>YJM789</strain>
    </source>
</reference>
<organism>
    <name type="scientific">Saccharomyces cerevisiae (strain YJM789)</name>
    <name type="common">Baker's yeast</name>
    <dbReference type="NCBI Taxonomy" id="307796"/>
    <lineage>
        <taxon>Eukaryota</taxon>
        <taxon>Fungi</taxon>
        <taxon>Dikarya</taxon>
        <taxon>Ascomycota</taxon>
        <taxon>Saccharomycotina</taxon>
        <taxon>Saccharomycetes</taxon>
        <taxon>Saccharomycetales</taxon>
        <taxon>Saccharomycetaceae</taxon>
        <taxon>Saccharomyces</taxon>
    </lineage>
</organism>
<proteinExistence type="inferred from homology"/>
<evidence type="ECO:0000250" key="1"/>
<evidence type="ECO:0000255" key="2">
    <source>
        <dbReference type="PROSITE-ProRule" id="PRU01150"/>
    </source>
</evidence>
<evidence type="ECO:0000305" key="3"/>
<gene>
    <name type="primary">CMC1</name>
    <name type="ORF">SCY_3245</name>
</gene>
<comment type="function">
    <text evidence="1">Required for mitochondrial cytochrome c oxidase (COX) assembly and respiration. Binds copper. May be involved in copper trafficking and distribution to mitochondrial COX and SOD1 (By similarity).</text>
</comment>
<comment type="subcellular location">
    <subcellularLocation>
        <location evidence="1">Mitochondrion inner membrane</location>
        <topology evidence="1">Peripheral membrane protein</topology>
        <orientation evidence="1">Intermembrane side</orientation>
    </subcellularLocation>
</comment>
<comment type="similarity">
    <text evidence="3">Belongs to the CMC family.</text>
</comment>
<comment type="sequence caution" evidence="3">
    <conflict type="erroneous initiation">
        <sequence resource="EMBL-CDS" id="EDN60033"/>
    </conflict>
</comment>
<accession>A6ZZI5</accession>
<dbReference type="EMBL" id="AAFW02000151">
    <property type="protein sequence ID" value="EDN60033.1"/>
    <property type="status" value="ALT_INIT"/>
    <property type="molecule type" value="Genomic_DNA"/>
</dbReference>
<dbReference type="HOGENOM" id="CLU_147575_0_0_1"/>
<dbReference type="OrthoDB" id="11133at4893"/>
<dbReference type="Proteomes" id="UP000007060">
    <property type="component" value="Unassembled WGS sequence"/>
</dbReference>
<dbReference type="GO" id="GO:0005743">
    <property type="term" value="C:mitochondrial inner membrane"/>
    <property type="evidence" value="ECO:0007669"/>
    <property type="project" value="UniProtKB-SubCell"/>
</dbReference>
<dbReference type="GO" id="GO:0046872">
    <property type="term" value="F:metal ion binding"/>
    <property type="evidence" value="ECO:0007669"/>
    <property type="project" value="UniProtKB-KW"/>
</dbReference>
<dbReference type="InterPro" id="IPR013892">
    <property type="entry name" value="Cyt_c_biogenesis_Cmc1-like"/>
</dbReference>
<dbReference type="Pfam" id="PF08583">
    <property type="entry name" value="Cmc1"/>
    <property type="match status" value="1"/>
</dbReference>
<dbReference type="PROSITE" id="PS51808">
    <property type="entry name" value="CHCH"/>
    <property type="match status" value="1"/>
</dbReference>